<feature type="chain" id="PRO_0000438206" description="Protein FLOURY 1">
    <location>
        <begin position="1"/>
        <end position="302"/>
    </location>
</feature>
<feature type="transmembrane region" description="Helical" evidence="1">
    <location>
        <begin position="27"/>
        <end position="47"/>
    </location>
</feature>
<feature type="transmembrane region" description="Helical" evidence="1">
    <location>
        <begin position="82"/>
        <end position="102"/>
    </location>
</feature>
<feature type="domain" description="GTD-binding" evidence="2">
    <location>
        <begin position="193"/>
        <end position="299"/>
    </location>
</feature>
<feature type="region of interest" description="Disordered" evidence="3">
    <location>
        <begin position="160"/>
        <end position="195"/>
    </location>
</feature>
<feature type="region of interest" description="Disordered" evidence="3">
    <location>
        <begin position="283"/>
        <end position="302"/>
    </location>
</feature>
<feature type="coiled-coil region" evidence="1">
    <location>
        <begin position="199"/>
        <end position="254"/>
    </location>
</feature>
<feature type="compositionally biased region" description="Acidic residues" evidence="3">
    <location>
        <begin position="172"/>
        <end position="192"/>
    </location>
</feature>
<feature type="mutagenesis site" description="In fl1-ref; no effect on zeins accumulation, but opaque kernels." evidence="4">
    <original>S</original>
    <variation>G</variation>
    <location>
        <position position="27"/>
    </location>
</feature>
<feature type="sequence conflict" description="In Ref. 4; ACG40193/ACG41841." evidence="7" ref="4">
    <original>T</original>
    <variation>A</variation>
    <location>
        <position position="66"/>
    </location>
</feature>
<feature type="sequence conflict" description="In Ref. 4; ACG40193/ACG41841." evidence="7" ref="4">
    <original>T</original>
    <variation>I</variation>
    <location>
        <position position="187"/>
    </location>
</feature>
<feature type="sequence conflict" description="In Ref. 4; ACG40193/ACG41841." evidence="7" ref="4">
    <original>G</original>
    <variation>S</variation>
    <location>
        <position position="280"/>
    </location>
</feature>
<organism>
    <name type="scientific">Zea mays</name>
    <name type="common">Maize</name>
    <dbReference type="NCBI Taxonomy" id="4577"/>
    <lineage>
        <taxon>Eukaryota</taxon>
        <taxon>Viridiplantae</taxon>
        <taxon>Streptophyta</taxon>
        <taxon>Embryophyta</taxon>
        <taxon>Tracheophyta</taxon>
        <taxon>Spermatophyta</taxon>
        <taxon>Magnoliopsida</taxon>
        <taxon>Liliopsida</taxon>
        <taxon>Poales</taxon>
        <taxon>Poaceae</taxon>
        <taxon>PACMAD clade</taxon>
        <taxon>Panicoideae</taxon>
        <taxon>Andropogonodae</taxon>
        <taxon>Andropogoneae</taxon>
        <taxon>Tripsacinae</taxon>
        <taxon>Zea</taxon>
    </lineage>
</organism>
<dbReference type="EMBL" id="EF536720">
    <property type="protein sequence ID" value="ABS85200.1"/>
    <property type="molecule type" value="mRNA"/>
</dbReference>
<dbReference type="EMBL" id="BT040382">
    <property type="protein sequence ID" value="ACF85387.1"/>
    <property type="molecule type" value="mRNA"/>
</dbReference>
<dbReference type="EMBL" id="EU968075">
    <property type="protein sequence ID" value="ACG40193.1"/>
    <property type="molecule type" value="mRNA"/>
</dbReference>
<dbReference type="EMBL" id="EU969723">
    <property type="protein sequence ID" value="ACG41841.1"/>
    <property type="molecule type" value="mRNA"/>
</dbReference>
<dbReference type="RefSeq" id="NP_001106064.1">
    <property type="nucleotide sequence ID" value="NM_001112594.1"/>
</dbReference>
<dbReference type="RefSeq" id="NP_001144622.1">
    <property type="nucleotide sequence ID" value="NM_001151150.1"/>
</dbReference>
<dbReference type="SMR" id="A8DMN5"/>
<dbReference type="FunCoup" id="A8DMN5">
    <property type="interactions" value="237"/>
</dbReference>
<dbReference type="STRING" id="4577.A8DMN5"/>
<dbReference type="PaxDb" id="4577-GRMZM2G094532_P01"/>
<dbReference type="EnsemblPlants" id="Zm00001eb080540_T001">
    <property type="protein sequence ID" value="Zm00001eb080540_P001"/>
    <property type="gene ID" value="Zm00001eb080540"/>
</dbReference>
<dbReference type="GeneID" id="100126364"/>
<dbReference type="Gramene" id="Zm00001eb080540_T001">
    <property type="protein sequence ID" value="Zm00001eb080540_P001"/>
    <property type="gene ID" value="Zm00001eb080540"/>
</dbReference>
<dbReference type="KEGG" id="zma:100126364"/>
<dbReference type="eggNOG" id="ENOG502S6F3">
    <property type="taxonomic scope" value="Eukaryota"/>
</dbReference>
<dbReference type="HOGENOM" id="CLU_057945_0_0_1"/>
<dbReference type="InParanoid" id="A8DMN5"/>
<dbReference type="OMA" id="QWVIMKS"/>
<dbReference type="OrthoDB" id="1100010at2759"/>
<dbReference type="Proteomes" id="UP000007305">
    <property type="component" value="Chromosome 2"/>
</dbReference>
<dbReference type="ExpressionAtlas" id="A8DMN5">
    <property type="expression patterns" value="baseline and differential"/>
</dbReference>
<dbReference type="GO" id="GO:0005789">
    <property type="term" value="C:endoplasmic reticulum membrane"/>
    <property type="evidence" value="ECO:0007669"/>
    <property type="project" value="UniProtKB-SubCell"/>
</dbReference>
<dbReference type="GO" id="GO:0080115">
    <property type="term" value="F:myosin XI tail binding"/>
    <property type="evidence" value="ECO:0007669"/>
    <property type="project" value="UniProtKB-ARBA"/>
</dbReference>
<dbReference type="InterPro" id="IPR007656">
    <property type="entry name" value="GTD-bd"/>
</dbReference>
<dbReference type="PANTHER" id="PTHR31422">
    <property type="entry name" value="BNAANNG28530D PROTEIN"/>
    <property type="match status" value="1"/>
</dbReference>
<dbReference type="PANTHER" id="PTHR31422:SF2">
    <property type="entry name" value="PROTEIN FLOURY 1-LIKE"/>
    <property type="match status" value="1"/>
</dbReference>
<dbReference type="Pfam" id="PF04576">
    <property type="entry name" value="Zein-binding"/>
    <property type="match status" value="1"/>
</dbReference>
<dbReference type="PROSITE" id="PS51775">
    <property type="entry name" value="GTD_BINDING"/>
    <property type="match status" value="1"/>
</dbReference>
<proteinExistence type="evidence at protein level"/>
<comment type="function">
    <text evidence="4">Involved in protein body development and 22 kDa alpha-zein localization.</text>
</comment>
<comment type="subunit">
    <text evidence="4 5">Interacts (via C-terminus) with both 22 kDa and 19 kDa alpha-zeins (PubMed:17693529). Interacts (via C-terminus) with OP10 (via N-terminus) (PubMed:27541862).</text>
</comment>
<comment type="subcellular location">
    <subcellularLocation>
        <location evidence="4">Endoplasmic reticulum membrane</location>
        <topology evidence="1">Multi-pass membrane protein</topology>
    </subcellularLocation>
    <text evidence="4">Found in the endoplasmic reticulum surrounding the protein body, but not in the cisternal membranes.</text>
</comment>
<comment type="tissue specificity">
    <text evidence="4">Expressed in endosperm. Not detected in embryo, leaves and roots.</text>
</comment>
<comment type="developmental stage">
    <text evidence="4">Accumulates at a high level in endosperm during the period of zein synthesis and protein body development and declines to a low level at kernel maturity.</text>
</comment>
<evidence type="ECO:0000255" key="1"/>
<evidence type="ECO:0000255" key="2">
    <source>
        <dbReference type="PROSITE-ProRule" id="PRU01111"/>
    </source>
</evidence>
<evidence type="ECO:0000256" key="3">
    <source>
        <dbReference type="SAM" id="MobiDB-lite"/>
    </source>
</evidence>
<evidence type="ECO:0000269" key="4">
    <source>
    </source>
</evidence>
<evidence type="ECO:0000269" key="5">
    <source>
    </source>
</evidence>
<evidence type="ECO:0000303" key="6">
    <source>
    </source>
</evidence>
<evidence type="ECO:0000305" key="7"/>
<accession>A8DMN5</accession>
<accession>B6TSW0</accession>
<gene>
    <name evidence="6" type="primary">FL1</name>
    <name evidence="7" type="ORF">GRMZM2G094532</name>
</gene>
<name>FL1_MAIZE</name>
<sequence>MGGNNDGVSGAACLKPLNGVSPTYVPSAGAGALYFLIGSGLGVVAVLHASGLAEVSGEWASAARWTEVSREWPSAARWAAQLAGSVGAQRLLLATSLLFLAVSVWRLARRCAAVEGRVGSTDSAVRALHVGGVVCAVCGSKIRALKRGCRGVERTRSVDSSKPVSRSLAAEFDQEADGEEEDNAGETSDPDDGSVQYLRRRLKEEMLLKEVALEELEKERHAAASAADEAMSKIACLRSEKALVEREARQFQEMMQQKQMYDRQVIESLQWVIMKSGMQGWEPEAITDRALSETSEDDRDKK</sequence>
<reference key="1">
    <citation type="journal article" date="2007" name="Plant Cell">
        <title>The maize floury1 gene encodes a novel endoplasmic reticulum protein involved in zein protein body formation.</title>
        <authorList>
            <person name="Holding D.R."/>
            <person name="Otegui M.S."/>
            <person name="Li B."/>
            <person name="Meeley R.B."/>
            <person name="Dam T."/>
            <person name="Hunter B.G."/>
            <person name="Jung R."/>
            <person name="Larkins B.A."/>
        </authorList>
    </citation>
    <scope>NUCLEOTIDE SEQUENCE [MRNA]</scope>
    <scope>DEVELOPMENTAL STAGE</scope>
    <scope>SUBCELLULAR LOCATION</scope>
    <scope>MUTAGENESIS OF SER-27</scope>
    <scope>TISSUE SPECIFICITY</scope>
    <scope>FUNCTION</scope>
    <scope>INTERACTION WITH ALPHA-ZEINS</scope>
</reference>
<reference key="2">
    <citation type="journal article" date="2009" name="Science">
        <title>The B73 maize genome: complexity, diversity, and dynamics.</title>
        <authorList>
            <person name="Schnable P.S."/>
            <person name="Ware D."/>
            <person name="Fulton R.S."/>
            <person name="Stein J.C."/>
            <person name="Wei F."/>
            <person name="Pasternak S."/>
            <person name="Liang C."/>
            <person name="Zhang J."/>
            <person name="Fulton L."/>
            <person name="Graves T.A."/>
            <person name="Minx P."/>
            <person name="Reily A.D."/>
            <person name="Courtney L."/>
            <person name="Kruchowski S.S."/>
            <person name="Tomlinson C."/>
            <person name="Strong C."/>
            <person name="Delehaunty K."/>
            <person name="Fronick C."/>
            <person name="Courtney B."/>
            <person name="Rock S.M."/>
            <person name="Belter E."/>
            <person name="Du F."/>
            <person name="Kim K."/>
            <person name="Abbott R.M."/>
            <person name="Cotton M."/>
            <person name="Levy A."/>
            <person name="Marchetto P."/>
            <person name="Ochoa K."/>
            <person name="Jackson S.M."/>
            <person name="Gillam B."/>
            <person name="Chen W."/>
            <person name="Yan L."/>
            <person name="Higginbotham J."/>
            <person name="Cardenas M."/>
            <person name="Waligorski J."/>
            <person name="Applebaum E."/>
            <person name="Phelps L."/>
            <person name="Falcone J."/>
            <person name="Kanchi K."/>
            <person name="Thane T."/>
            <person name="Scimone A."/>
            <person name="Thane N."/>
            <person name="Henke J."/>
            <person name="Wang T."/>
            <person name="Ruppert J."/>
            <person name="Shah N."/>
            <person name="Rotter K."/>
            <person name="Hodges J."/>
            <person name="Ingenthron E."/>
            <person name="Cordes M."/>
            <person name="Kohlberg S."/>
            <person name="Sgro J."/>
            <person name="Delgado B."/>
            <person name="Mead K."/>
            <person name="Chinwalla A."/>
            <person name="Leonard S."/>
            <person name="Crouse K."/>
            <person name="Collura K."/>
            <person name="Kudrna D."/>
            <person name="Currie J."/>
            <person name="He R."/>
            <person name="Angelova A."/>
            <person name="Rajasekar S."/>
            <person name="Mueller T."/>
            <person name="Lomeli R."/>
            <person name="Scara G."/>
            <person name="Ko A."/>
            <person name="Delaney K."/>
            <person name="Wissotski M."/>
            <person name="Lopez G."/>
            <person name="Campos D."/>
            <person name="Braidotti M."/>
            <person name="Ashley E."/>
            <person name="Golser W."/>
            <person name="Kim H."/>
            <person name="Lee S."/>
            <person name="Lin J."/>
            <person name="Dujmic Z."/>
            <person name="Kim W."/>
            <person name="Talag J."/>
            <person name="Zuccolo A."/>
            <person name="Fan C."/>
            <person name="Sebastian A."/>
            <person name="Kramer M."/>
            <person name="Spiegel L."/>
            <person name="Nascimento L."/>
            <person name="Zutavern T."/>
            <person name="Miller B."/>
            <person name="Ambroise C."/>
            <person name="Muller S."/>
            <person name="Spooner W."/>
            <person name="Narechania A."/>
            <person name="Ren L."/>
            <person name="Wei S."/>
            <person name="Kumari S."/>
            <person name="Faga B."/>
            <person name="Levy M.J."/>
            <person name="McMahan L."/>
            <person name="Van Buren P."/>
            <person name="Vaughn M.W."/>
            <person name="Ying K."/>
            <person name="Yeh C.-T."/>
            <person name="Emrich S.J."/>
            <person name="Jia Y."/>
            <person name="Kalyanaraman A."/>
            <person name="Hsia A.-P."/>
            <person name="Barbazuk W.B."/>
            <person name="Baucom R.S."/>
            <person name="Brutnell T.P."/>
            <person name="Carpita N.C."/>
            <person name="Chaparro C."/>
            <person name="Chia J.-M."/>
            <person name="Deragon J.-M."/>
            <person name="Estill J.C."/>
            <person name="Fu Y."/>
            <person name="Jeddeloh J.A."/>
            <person name="Han Y."/>
            <person name="Lee H."/>
            <person name="Li P."/>
            <person name="Lisch D.R."/>
            <person name="Liu S."/>
            <person name="Liu Z."/>
            <person name="Nagel D.H."/>
            <person name="McCann M.C."/>
            <person name="SanMiguel P."/>
            <person name="Myers A.M."/>
            <person name="Nettleton D."/>
            <person name="Nguyen J."/>
            <person name="Penning B.W."/>
            <person name="Ponnala L."/>
            <person name="Schneider K.L."/>
            <person name="Schwartz D.C."/>
            <person name="Sharma A."/>
            <person name="Soderlund C."/>
            <person name="Springer N.M."/>
            <person name="Sun Q."/>
            <person name="Wang H."/>
            <person name="Waterman M."/>
            <person name="Westerman R."/>
            <person name="Wolfgruber T.K."/>
            <person name="Yang L."/>
            <person name="Yu Y."/>
            <person name="Zhang L."/>
            <person name="Zhou S."/>
            <person name="Zhu Q."/>
            <person name="Bennetzen J.L."/>
            <person name="Dawe R.K."/>
            <person name="Jiang J."/>
            <person name="Jiang N."/>
            <person name="Presting G.G."/>
            <person name="Wessler S.R."/>
            <person name="Aluru S."/>
            <person name="Martienssen R.A."/>
            <person name="Clifton S.W."/>
            <person name="McCombie W.R."/>
            <person name="Wing R.A."/>
            <person name="Wilson R.K."/>
        </authorList>
    </citation>
    <scope>NUCLEOTIDE SEQUENCE [LARGE SCALE GENOMIC DNA]</scope>
    <source>
        <strain>cv. B73</strain>
    </source>
</reference>
<reference key="3">
    <citation type="journal article" date="2009" name="PLoS Genet.">
        <title>Sequencing, mapping, and analysis of 27,455 maize full-length cDNAs.</title>
        <authorList>
            <person name="Soderlund C."/>
            <person name="Descour A."/>
            <person name="Kudrna D."/>
            <person name="Bomhoff M."/>
            <person name="Boyd L."/>
            <person name="Currie J."/>
            <person name="Angelova A."/>
            <person name="Collura K."/>
            <person name="Wissotski M."/>
            <person name="Ashley E."/>
            <person name="Morrow D."/>
            <person name="Fernandes J."/>
            <person name="Walbot V."/>
            <person name="Yu Y."/>
        </authorList>
    </citation>
    <scope>NUCLEOTIDE SEQUENCE [LARGE SCALE MRNA]</scope>
    <source>
        <strain>cv. B73</strain>
    </source>
</reference>
<reference key="4">
    <citation type="journal article" date="2009" name="Plant Mol. Biol.">
        <title>Insights into corn genes derived from large-scale cDNA sequencing.</title>
        <authorList>
            <person name="Alexandrov N.N."/>
            <person name="Brover V.V."/>
            <person name="Freidin S."/>
            <person name="Troukhan M.E."/>
            <person name="Tatarinova T.V."/>
            <person name="Zhang H."/>
            <person name="Swaller T.J."/>
            <person name="Lu Y.-P."/>
            <person name="Bouck J."/>
            <person name="Flavell R.B."/>
            <person name="Feldmann K.A."/>
        </authorList>
    </citation>
    <scope>NUCLEOTIDE SEQUENCE [LARGE SCALE MRNA]</scope>
</reference>
<reference key="5">
    <citation type="journal article" date="2016" name="PLoS Genet.">
        <title>Maize opaque10 encodes a cereal-specific protein that is essential for the proper distribution of zeins in endosperm protein bodies.</title>
        <authorList>
            <person name="Yao D."/>
            <person name="Qi W."/>
            <person name="Li X."/>
            <person name="Yang Q."/>
            <person name="Yan S."/>
            <person name="Ling H."/>
            <person name="Wang G."/>
            <person name="Wang G."/>
            <person name="Song R."/>
        </authorList>
    </citation>
    <scope>INTERACTION WITH OP10</scope>
</reference>
<protein>
    <recommendedName>
        <fullName evidence="6">Protein FLOURY 1</fullName>
    </recommendedName>
</protein>
<keyword id="KW-0175">Coiled coil</keyword>
<keyword id="KW-0256">Endoplasmic reticulum</keyword>
<keyword id="KW-0472">Membrane</keyword>
<keyword id="KW-1185">Reference proteome</keyword>
<keyword id="KW-0812">Transmembrane</keyword>
<keyword id="KW-1133">Transmembrane helix</keyword>